<comment type="function">
    <text evidence="1">Not known; immunogenic protein.</text>
</comment>
<comment type="subcellular location">
    <subcellularLocation>
        <location evidence="1">Secreted</location>
    </subcellularLocation>
</comment>
<sequence>MKKIATATIATAGFATIAIASGNQAHASEQDNYGYNPNDPTSYSYTYTIDAQGNYHYTWKGNWHPSQLNQDNGYYSYYYYNGYNNYSYNNYNNGYSYNNYSRYNNYSNNNQSYNYNNYNSYNTNSYRTGGLGASYSTSSNNVQVTTTMAPSSNGRSISSGYTSGRNLYTSGQCTYYVFDRVGGKIGSTWGNASNWANAAARAGYTVNNTPKAGAIMQTTQGAYGHVAYVESVNNNGSVRVSEMNYGYGPGVVTSRTISASQAAGYNFIH</sequence>
<gene>
    <name type="primary">ssaA2</name>
    <name type="ordered locus">SAR2383</name>
</gene>
<accession>Q6GED5</accession>
<keyword id="KW-0677">Repeat</keyword>
<keyword id="KW-0964">Secreted</keyword>
<keyword id="KW-0732">Signal</keyword>
<keyword id="KW-0843">Virulence</keyword>
<proteinExistence type="inferred from homology"/>
<evidence type="ECO:0000250" key="1"/>
<evidence type="ECO:0000255" key="2"/>
<evidence type="ECO:0000255" key="3">
    <source>
        <dbReference type="PROSITE-ProRule" id="PRU00048"/>
    </source>
</evidence>
<protein>
    <recommendedName>
        <fullName>Staphylococcal secretory antigen ssaA2</fullName>
    </recommendedName>
</protein>
<reference key="1">
    <citation type="journal article" date="2004" name="Proc. Natl. Acad. Sci. U.S.A.">
        <title>Complete genomes of two clinical Staphylococcus aureus strains: evidence for the rapid evolution of virulence and drug resistance.</title>
        <authorList>
            <person name="Holden M.T.G."/>
            <person name="Feil E.J."/>
            <person name="Lindsay J.A."/>
            <person name="Peacock S.J."/>
            <person name="Day N.P.J."/>
            <person name="Enright M.C."/>
            <person name="Foster T.J."/>
            <person name="Moore C.E."/>
            <person name="Hurst L."/>
            <person name="Atkin R."/>
            <person name="Barron A."/>
            <person name="Bason N."/>
            <person name="Bentley S.D."/>
            <person name="Chillingworth C."/>
            <person name="Chillingworth T."/>
            <person name="Churcher C."/>
            <person name="Clark L."/>
            <person name="Corton C."/>
            <person name="Cronin A."/>
            <person name="Doggett J."/>
            <person name="Dowd L."/>
            <person name="Feltwell T."/>
            <person name="Hance Z."/>
            <person name="Harris B."/>
            <person name="Hauser H."/>
            <person name="Holroyd S."/>
            <person name="Jagels K."/>
            <person name="James K.D."/>
            <person name="Lennard N."/>
            <person name="Line A."/>
            <person name="Mayes R."/>
            <person name="Moule S."/>
            <person name="Mungall K."/>
            <person name="Ormond D."/>
            <person name="Quail M.A."/>
            <person name="Rabbinowitsch E."/>
            <person name="Rutherford K.M."/>
            <person name="Sanders M."/>
            <person name="Sharp S."/>
            <person name="Simmonds M."/>
            <person name="Stevens K."/>
            <person name="Whitehead S."/>
            <person name="Barrell B.G."/>
            <person name="Spratt B.G."/>
            <person name="Parkhill J."/>
        </authorList>
    </citation>
    <scope>NUCLEOTIDE SEQUENCE [LARGE SCALE GENOMIC DNA]</scope>
    <source>
        <strain>MRSA252</strain>
    </source>
</reference>
<feature type="signal peptide" evidence="2">
    <location>
        <begin position="1"/>
        <end position="27"/>
    </location>
</feature>
<feature type="chain" id="PRO_0000045317" description="Staphylococcal secretory antigen ssaA2">
    <location>
        <begin position="28"/>
        <end position="269"/>
    </location>
</feature>
<feature type="repeat" description="1">
    <location>
        <begin position="83"/>
        <end position="85"/>
    </location>
</feature>
<feature type="repeat" description="2">
    <location>
        <begin position="88"/>
        <end position="90"/>
    </location>
</feature>
<feature type="repeat" description="3">
    <location>
        <begin position="91"/>
        <end position="93"/>
    </location>
</feature>
<feature type="repeat" description="4">
    <location>
        <begin position="97"/>
        <end position="99"/>
    </location>
</feature>
<feature type="repeat" description="5">
    <location>
        <begin position="103"/>
        <end position="105"/>
    </location>
</feature>
<feature type="repeat" description="6">
    <location>
        <begin position="106"/>
        <end position="108"/>
    </location>
</feature>
<feature type="repeat" description="7">
    <location>
        <begin position="115"/>
        <end position="117"/>
    </location>
</feature>
<feature type="domain" description="Peptidase C51" evidence="3">
    <location>
        <begin position="148"/>
        <end position="269"/>
    </location>
</feature>
<feature type="region of interest" description="7 X 3 AA repeats of Y-[NS]-N">
    <location>
        <begin position="83"/>
        <end position="115"/>
    </location>
</feature>
<name>SSAA2_STAAR</name>
<dbReference type="EMBL" id="BX571856">
    <property type="protein sequence ID" value="CAG41364.1"/>
    <property type="molecule type" value="Genomic_DNA"/>
</dbReference>
<dbReference type="RefSeq" id="WP_000717394.1">
    <property type="nucleotide sequence ID" value="NC_002952.2"/>
</dbReference>
<dbReference type="SMR" id="Q6GED5"/>
<dbReference type="KEGG" id="sar:SAR2383"/>
<dbReference type="HOGENOM" id="CLU_016043_11_0_9"/>
<dbReference type="Proteomes" id="UP000000596">
    <property type="component" value="Chromosome"/>
</dbReference>
<dbReference type="GO" id="GO:0005576">
    <property type="term" value="C:extracellular region"/>
    <property type="evidence" value="ECO:0007669"/>
    <property type="project" value="UniProtKB-SubCell"/>
</dbReference>
<dbReference type="Gene3D" id="3.90.1720.10">
    <property type="entry name" value="endopeptidase domain like (from Nostoc punctiforme)"/>
    <property type="match status" value="1"/>
</dbReference>
<dbReference type="InterPro" id="IPR007921">
    <property type="entry name" value="CHAP_dom"/>
</dbReference>
<dbReference type="InterPro" id="IPR038765">
    <property type="entry name" value="Papain-like_cys_pep_sf"/>
</dbReference>
<dbReference type="Pfam" id="PF05257">
    <property type="entry name" value="CHAP"/>
    <property type="match status" value="1"/>
</dbReference>
<dbReference type="SUPFAM" id="SSF54001">
    <property type="entry name" value="Cysteine proteinases"/>
    <property type="match status" value="1"/>
</dbReference>
<dbReference type="PROSITE" id="PS50911">
    <property type="entry name" value="CHAP"/>
    <property type="match status" value="1"/>
</dbReference>
<organism>
    <name type="scientific">Staphylococcus aureus (strain MRSA252)</name>
    <dbReference type="NCBI Taxonomy" id="282458"/>
    <lineage>
        <taxon>Bacteria</taxon>
        <taxon>Bacillati</taxon>
        <taxon>Bacillota</taxon>
        <taxon>Bacilli</taxon>
        <taxon>Bacillales</taxon>
        <taxon>Staphylococcaceae</taxon>
        <taxon>Staphylococcus</taxon>
    </lineage>
</organism>